<accession>A3CT23</accession>
<feature type="chain" id="PRO_1000005677" description="Cytidylate kinase">
    <location>
        <begin position="1"/>
        <end position="181"/>
    </location>
</feature>
<feature type="binding site" evidence="1">
    <location>
        <begin position="7"/>
        <end position="15"/>
    </location>
    <ligand>
        <name>ATP</name>
        <dbReference type="ChEBI" id="CHEBI:30616"/>
    </ligand>
</feature>
<dbReference type="EC" id="2.7.4.25" evidence="1"/>
<dbReference type="EMBL" id="CP000562">
    <property type="protein sequence ID" value="ABN56523.1"/>
    <property type="molecule type" value="Genomic_DNA"/>
</dbReference>
<dbReference type="RefSeq" id="WP_011843433.1">
    <property type="nucleotide sequence ID" value="NC_009051.1"/>
</dbReference>
<dbReference type="SMR" id="A3CT23"/>
<dbReference type="STRING" id="368407.Memar_0590"/>
<dbReference type="GeneID" id="4847872"/>
<dbReference type="GeneID" id="76731160"/>
<dbReference type="KEGG" id="mem:Memar_0590"/>
<dbReference type="eggNOG" id="arCOG01037">
    <property type="taxonomic scope" value="Archaea"/>
</dbReference>
<dbReference type="HOGENOM" id="CLU_079959_1_0_2"/>
<dbReference type="OrthoDB" id="31096at2157"/>
<dbReference type="Proteomes" id="UP000002146">
    <property type="component" value="Chromosome"/>
</dbReference>
<dbReference type="GO" id="GO:0005737">
    <property type="term" value="C:cytoplasm"/>
    <property type="evidence" value="ECO:0007669"/>
    <property type="project" value="UniProtKB-SubCell"/>
</dbReference>
<dbReference type="GO" id="GO:0005524">
    <property type="term" value="F:ATP binding"/>
    <property type="evidence" value="ECO:0007669"/>
    <property type="project" value="UniProtKB-UniRule"/>
</dbReference>
<dbReference type="GO" id="GO:0036430">
    <property type="term" value="F:CMP kinase activity"/>
    <property type="evidence" value="ECO:0007669"/>
    <property type="project" value="RHEA"/>
</dbReference>
<dbReference type="GO" id="GO:0036431">
    <property type="term" value="F:dCMP kinase activity"/>
    <property type="evidence" value="ECO:0007669"/>
    <property type="project" value="RHEA"/>
</dbReference>
<dbReference type="GO" id="GO:0006220">
    <property type="term" value="P:pyrimidine nucleotide metabolic process"/>
    <property type="evidence" value="ECO:0007669"/>
    <property type="project" value="UniProtKB-UniRule"/>
</dbReference>
<dbReference type="CDD" id="cd02020">
    <property type="entry name" value="CMPK"/>
    <property type="match status" value="1"/>
</dbReference>
<dbReference type="Gene3D" id="3.40.50.300">
    <property type="entry name" value="P-loop containing nucleotide triphosphate hydrolases"/>
    <property type="match status" value="1"/>
</dbReference>
<dbReference type="HAMAP" id="MF_00239">
    <property type="entry name" value="Cytidyl_kinase_type2"/>
    <property type="match status" value="1"/>
</dbReference>
<dbReference type="InterPro" id="IPR011892">
    <property type="entry name" value="Cyt_kin_arch"/>
</dbReference>
<dbReference type="InterPro" id="IPR011994">
    <property type="entry name" value="Cytidylate_kinase_dom"/>
</dbReference>
<dbReference type="InterPro" id="IPR027417">
    <property type="entry name" value="P-loop_NTPase"/>
</dbReference>
<dbReference type="NCBIfam" id="TIGR02173">
    <property type="entry name" value="cyt_kin_arch"/>
    <property type="match status" value="1"/>
</dbReference>
<dbReference type="Pfam" id="PF13189">
    <property type="entry name" value="Cytidylate_kin2"/>
    <property type="match status" value="1"/>
</dbReference>
<dbReference type="SUPFAM" id="SSF52540">
    <property type="entry name" value="P-loop containing nucleoside triphosphate hydrolases"/>
    <property type="match status" value="1"/>
</dbReference>
<keyword id="KW-0067">ATP-binding</keyword>
<keyword id="KW-0963">Cytoplasm</keyword>
<keyword id="KW-0418">Kinase</keyword>
<keyword id="KW-0547">Nucleotide-binding</keyword>
<keyword id="KW-0808">Transferase</keyword>
<reference key="1">
    <citation type="journal article" date="2009" name="Stand. Genomic Sci.">
        <title>Complete genome sequence of Methanoculleus marisnigri Romesser et al. 1981 type strain JR1.</title>
        <authorList>
            <person name="Anderson I.J."/>
            <person name="Sieprawska-Lupa M."/>
            <person name="Lapidus A."/>
            <person name="Nolan M."/>
            <person name="Copeland A."/>
            <person name="Glavina Del Rio T."/>
            <person name="Tice H."/>
            <person name="Dalin E."/>
            <person name="Barry K."/>
            <person name="Saunders E."/>
            <person name="Han C."/>
            <person name="Brettin T."/>
            <person name="Detter J.C."/>
            <person name="Bruce D."/>
            <person name="Mikhailova N."/>
            <person name="Pitluck S."/>
            <person name="Hauser L."/>
            <person name="Land M."/>
            <person name="Lucas S."/>
            <person name="Richardson P."/>
            <person name="Whitman W.B."/>
            <person name="Kyrpides N.C."/>
        </authorList>
    </citation>
    <scope>NUCLEOTIDE SEQUENCE [LARGE SCALE GENOMIC DNA]</scope>
    <source>
        <strain>ATCC 35101 / DSM 1498 / JR1</strain>
    </source>
</reference>
<sequence length="181" mass="19728">MRITISGPPGSGTTSLARYLAGKHGLDLISAGEVFRQLAKEHGMDLADFGKFAENDPSVDRMIDARQKEIGEAAENIIIEGRLSGRMVGNADLRIWLSASLSCRARRIAGRDGMDEEGARAYTENRQRSEATRYRNYYGIEIDDLSPYDIVLSSETFGVDALGTIVDAAIACLARQQAADL</sequence>
<protein>
    <recommendedName>
        <fullName evidence="1">Cytidylate kinase</fullName>
        <shortName evidence="1">CK</shortName>
        <ecNumber evidence="1">2.7.4.25</ecNumber>
    </recommendedName>
    <alternativeName>
        <fullName evidence="1">Cytidine monophosphate kinase</fullName>
        <shortName evidence="1">CMP kinase</shortName>
    </alternativeName>
</protein>
<comment type="catalytic activity">
    <reaction evidence="1">
        <text>CMP + ATP = CDP + ADP</text>
        <dbReference type="Rhea" id="RHEA:11600"/>
        <dbReference type="ChEBI" id="CHEBI:30616"/>
        <dbReference type="ChEBI" id="CHEBI:58069"/>
        <dbReference type="ChEBI" id="CHEBI:60377"/>
        <dbReference type="ChEBI" id="CHEBI:456216"/>
        <dbReference type="EC" id="2.7.4.25"/>
    </reaction>
</comment>
<comment type="catalytic activity">
    <reaction evidence="1">
        <text>dCMP + ATP = dCDP + ADP</text>
        <dbReference type="Rhea" id="RHEA:25094"/>
        <dbReference type="ChEBI" id="CHEBI:30616"/>
        <dbReference type="ChEBI" id="CHEBI:57566"/>
        <dbReference type="ChEBI" id="CHEBI:58593"/>
        <dbReference type="ChEBI" id="CHEBI:456216"/>
        <dbReference type="EC" id="2.7.4.25"/>
    </reaction>
</comment>
<comment type="subcellular location">
    <subcellularLocation>
        <location evidence="1">Cytoplasm</location>
    </subcellularLocation>
</comment>
<comment type="similarity">
    <text evidence="1">Belongs to the cytidylate kinase family. Type 2 subfamily.</text>
</comment>
<evidence type="ECO:0000255" key="1">
    <source>
        <dbReference type="HAMAP-Rule" id="MF_00239"/>
    </source>
</evidence>
<proteinExistence type="inferred from homology"/>
<organism>
    <name type="scientific">Methanoculleus marisnigri (strain ATCC 35101 / DSM 1498 / JR1)</name>
    <dbReference type="NCBI Taxonomy" id="368407"/>
    <lineage>
        <taxon>Archaea</taxon>
        <taxon>Methanobacteriati</taxon>
        <taxon>Methanobacteriota</taxon>
        <taxon>Stenosarchaea group</taxon>
        <taxon>Methanomicrobia</taxon>
        <taxon>Methanomicrobiales</taxon>
        <taxon>Methanomicrobiaceae</taxon>
        <taxon>Methanoculleus</taxon>
    </lineage>
</organism>
<name>KCY_METMJ</name>
<gene>
    <name evidence="1" type="primary">cmk</name>
    <name type="ordered locus">Memar_0590</name>
</gene>